<reference key="1">
    <citation type="submission" date="2006-03" db="EMBL/GenBank/DDBJ databases">
        <title>A genome annotation-driven approach to cloning the human ORFeome.</title>
        <authorList>
            <person name="Collins J.E."/>
            <person name="Wright C.L."/>
            <person name="Edwards C.A."/>
            <person name="Davis M.P."/>
            <person name="Grinham J.A."/>
            <person name="Cole C.G."/>
            <person name="Goward M.E."/>
            <person name="Aguado B."/>
            <person name="Mallya M."/>
            <person name="Mokrab Y."/>
            <person name="Huckle E.J."/>
            <person name="Beare D.M."/>
            <person name="Dunham I."/>
        </authorList>
    </citation>
    <scope>NUCLEOTIDE SEQUENCE [LARGE SCALE MRNA] (ISOFORM 1)</scope>
</reference>
<reference key="2">
    <citation type="journal article" date="1999" name="Nature">
        <title>The DNA sequence of human chromosome 22.</title>
        <authorList>
            <person name="Dunham I."/>
            <person name="Hunt A.R."/>
            <person name="Collins J.E."/>
            <person name="Bruskiewich R."/>
            <person name="Beare D.M."/>
            <person name="Clamp M."/>
            <person name="Smink L.J."/>
            <person name="Ainscough R."/>
            <person name="Almeida J.P."/>
            <person name="Babbage A.K."/>
            <person name="Bagguley C."/>
            <person name="Bailey J."/>
            <person name="Barlow K.F."/>
            <person name="Bates K.N."/>
            <person name="Beasley O.P."/>
            <person name="Bird C.P."/>
            <person name="Blakey S.E."/>
            <person name="Bridgeman A.M."/>
            <person name="Buck D."/>
            <person name="Burgess J."/>
            <person name="Burrill W.D."/>
            <person name="Burton J."/>
            <person name="Carder C."/>
            <person name="Carter N.P."/>
            <person name="Chen Y."/>
            <person name="Clark G."/>
            <person name="Clegg S.M."/>
            <person name="Cobley V.E."/>
            <person name="Cole C.G."/>
            <person name="Collier R.E."/>
            <person name="Connor R."/>
            <person name="Conroy D."/>
            <person name="Corby N.R."/>
            <person name="Coville G.J."/>
            <person name="Cox A.V."/>
            <person name="Davis J."/>
            <person name="Dawson E."/>
            <person name="Dhami P.D."/>
            <person name="Dockree C."/>
            <person name="Dodsworth S.J."/>
            <person name="Durbin R.M."/>
            <person name="Ellington A.G."/>
            <person name="Evans K.L."/>
            <person name="Fey J.M."/>
            <person name="Fleming K."/>
            <person name="French L."/>
            <person name="Garner A.A."/>
            <person name="Gilbert J.G.R."/>
            <person name="Goward M.E."/>
            <person name="Grafham D.V."/>
            <person name="Griffiths M.N.D."/>
            <person name="Hall C."/>
            <person name="Hall R.E."/>
            <person name="Hall-Tamlyn G."/>
            <person name="Heathcott R.W."/>
            <person name="Ho S."/>
            <person name="Holmes S."/>
            <person name="Hunt S.E."/>
            <person name="Jones M.C."/>
            <person name="Kershaw J."/>
            <person name="Kimberley A.M."/>
            <person name="King A."/>
            <person name="Laird G.K."/>
            <person name="Langford C.F."/>
            <person name="Leversha M.A."/>
            <person name="Lloyd C."/>
            <person name="Lloyd D.M."/>
            <person name="Martyn I.D."/>
            <person name="Mashreghi-Mohammadi M."/>
            <person name="Matthews L.H."/>
            <person name="Mccann O.T."/>
            <person name="Mcclay J."/>
            <person name="Mclaren S."/>
            <person name="McMurray A.A."/>
            <person name="Milne S.A."/>
            <person name="Mortimore B.J."/>
            <person name="Odell C.N."/>
            <person name="Pavitt R."/>
            <person name="Pearce A.V."/>
            <person name="Pearson D."/>
            <person name="Phillimore B.J.C.T."/>
            <person name="Phillips S.H."/>
            <person name="Plumb R.W."/>
            <person name="Ramsay H."/>
            <person name="Ramsey Y."/>
            <person name="Rogers L."/>
            <person name="Ross M.T."/>
            <person name="Scott C.E."/>
            <person name="Sehra H.K."/>
            <person name="Skuce C.D."/>
            <person name="Smalley S."/>
            <person name="Smith M.L."/>
            <person name="Soderlund C."/>
            <person name="Spragon L."/>
            <person name="Steward C.A."/>
            <person name="Sulston J.E."/>
            <person name="Swann R.M."/>
            <person name="Vaudin M."/>
            <person name="Wall M."/>
            <person name="Wallis J.M."/>
            <person name="Whiteley M.N."/>
            <person name="Willey D.L."/>
            <person name="Williams L."/>
            <person name="Williams S.A."/>
            <person name="Williamson H."/>
            <person name="Wilmer T.E."/>
            <person name="Wilming L."/>
            <person name="Wright C.L."/>
            <person name="Hubbard T."/>
            <person name="Bentley D.R."/>
            <person name="Beck S."/>
            <person name="Rogers J."/>
            <person name="Shimizu N."/>
            <person name="Minoshima S."/>
            <person name="Kawasaki K."/>
            <person name="Sasaki T."/>
            <person name="Asakawa S."/>
            <person name="Kudoh J."/>
            <person name="Shintani A."/>
            <person name="Shibuya K."/>
            <person name="Yoshizaki Y."/>
            <person name="Aoki N."/>
            <person name="Mitsuyama S."/>
            <person name="Roe B.A."/>
            <person name="Chen F."/>
            <person name="Chu L."/>
            <person name="Crabtree J."/>
            <person name="Deschamps S."/>
            <person name="Do A."/>
            <person name="Do T."/>
            <person name="Dorman A."/>
            <person name="Fang F."/>
            <person name="Fu Y."/>
            <person name="Hu P."/>
            <person name="Hua A."/>
            <person name="Kenton S."/>
            <person name="Lai H."/>
            <person name="Lao H.I."/>
            <person name="Lewis J."/>
            <person name="Lewis S."/>
            <person name="Lin S.-P."/>
            <person name="Loh P."/>
            <person name="Malaj E."/>
            <person name="Nguyen T."/>
            <person name="Pan H."/>
            <person name="Phan S."/>
            <person name="Qi S."/>
            <person name="Qian Y."/>
            <person name="Ray L."/>
            <person name="Ren Q."/>
            <person name="Shaull S."/>
            <person name="Sloan D."/>
            <person name="Song L."/>
            <person name="Wang Q."/>
            <person name="Wang Y."/>
            <person name="Wang Z."/>
            <person name="White J."/>
            <person name="Willingham D."/>
            <person name="Wu H."/>
            <person name="Yao Z."/>
            <person name="Zhan M."/>
            <person name="Zhang G."/>
            <person name="Chissoe S."/>
            <person name="Murray J."/>
            <person name="Miller N."/>
            <person name="Minx P."/>
            <person name="Fulton R."/>
            <person name="Johnson D."/>
            <person name="Bemis G."/>
            <person name="Bentley D."/>
            <person name="Bradshaw H."/>
            <person name="Bourne S."/>
            <person name="Cordes M."/>
            <person name="Du Z."/>
            <person name="Fulton L."/>
            <person name="Goela D."/>
            <person name="Graves T."/>
            <person name="Hawkins J."/>
            <person name="Hinds K."/>
            <person name="Kemp K."/>
            <person name="Latreille P."/>
            <person name="Layman D."/>
            <person name="Ozersky P."/>
            <person name="Rohlfing T."/>
            <person name="Scheet P."/>
            <person name="Walker C."/>
            <person name="Wamsley A."/>
            <person name="Wohldmann P."/>
            <person name="Pepin K."/>
            <person name="Nelson J."/>
            <person name="Korf I."/>
            <person name="Bedell J.A."/>
            <person name="Hillier L.W."/>
            <person name="Mardis E."/>
            <person name="Waterston R."/>
            <person name="Wilson R."/>
            <person name="Emanuel B.S."/>
            <person name="Shaikh T."/>
            <person name="Kurahashi H."/>
            <person name="Saitta S."/>
            <person name="Budarf M.L."/>
            <person name="McDermid H.E."/>
            <person name="Johnson A."/>
            <person name="Wong A.C.C."/>
            <person name="Morrow B.E."/>
            <person name="Edelmann L."/>
            <person name="Kim U.J."/>
            <person name="Shizuya H."/>
            <person name="Simon M.I."/>
            <person name="Dumanski J.P."/>
            <person name="Peyrard M."/>
            <person name="Kedra D."/>
            <person name="Seroussi E."/>
            <person name="Fransson I."/>
            <person name="Tapia I."/>
            <person name="Bruder C.E."/>
            <person name="O'Brien K.P."/>
            <person name="Wilkinson P."/>
            <person name="Bodenteich A."/>
            <person name="Hartman K."/>
            <person name="Hu X."/>
            <person name="Khan A.S."/>
            <person name="Lane L."/>
            <person name="Tilahun Y."/>
            <person name="Wright H."/>
        </authorList>
    </citation>
    <scope>NUCLEOTIDE SEQUENCE [LARGE SCALE GENOMIC DNA]</scope>
</reference>
<reference key="3">
    <citation type="journal article" date="2004" name="Nat. Genet.">
        <title>Complete sequencing and characterization of 21,243 full-length human cDNAs.</title>
        <authorList>
            <person name="Ota T."/>
            <person name="Suzuki Y."/>
            <person name="Nishikawa T."/>
            <person name="Otsuki T."/>
            <person name="Sugiyama T."/>
            <person name="Irie R."/>
            <person name="Wakamatsu A."/>
            <person name="Hayashi K."/>
            <person name="Sato H."/>
            <person name="Nagai K."/>
            <person name="Kimura K."/>
            <person name="Makita H."/>
            <person name="Sekine M."/>
            <person name="Obayashi M."/>
            <person name="Nishi T."/>
            <person name="Shibahara T."/>
            <person name="Tanaka T."/>
            <person name="Ishii S."/>
            <person name="Yamamoto J."/>
            <person name="Saito K."/>
            <person name="Kawai Y."/>
            <person name="Isono Y."/>
            <person name="Nakamura Y."/>
            <person name="Nagahari K."/>
            <person name="Murakami K."/>
            <person name="Yasuda T."/>
            <person name="Iwayanagi T."/>
            <person name="Wagatsuma M."/>
            <person name="Shiratori A."/>
            <person name="Sudo H."/>
            <person name="Hosoiri T."/>
            <person name="Kaku Y."/>
            <person name="Kodaira H."/>
            <person name="Kondo H."/>
            <person name="Sugawara M."/>
            <person name="Takahashi M."/>
            <person name="Kanda K."/>
            <person name="Yokoi T."/>
            <person name="Furuya T."/>
            <person name="Kikkawa E."/>
            <person name="Omura Y."/>
            <person name="Abe K."/>
            <person name="Kamihara K."/>
            <person name="Katsuta N."/>
            <person name="Sato K."/>
            <person name="Tanikawa M."/>
            <person name="Yamazaki M."/>
            <person name="Ninomiya K."/>
            <person name="Ishibashi T."/>
            <person name="Yamashita H."/>
            <person name="Murakawa K."/>
            <person name="Fujimori K."/>
            <person name="Tanai H."/>
            <person name="Kimata M."/>
            <person name="Watanabe M."/>
            <person name="Hiraoka S."/>
            <person name="Chiba Y."/>
            <person name="Ishida S."/>
            <person name="Ono Y."/>
            <person name="Takiguchi S."/>
            <person name="Watanabe S."/>
            <person name="Yosida M."/>
            <person name="Hotuta T."/>
            <person name="Kusano J."/>
            <person name="Kanehori K."/>
            <person name="Takahashi-Fujii A."/>
            <person name="Hara H."/>
            <person name="Tanase T.-O."/>
            <person name="Nomura Y."/>
            <person name="Togiya S."/>
            <person name="Komai F."/>
            <person name="Hara R."/>
            <person name="Takeuchi K."/>
            <person name="Arita M."/>
            <person name="Imose N."/>
            <person name="Musashino K."/>
            <person name="Yuuki H."/>
            <person name="Oshima A."/>
            <person name="Sasaki N."/>
            <person name="Aotsuka S."/>
            <person name="Yoshikawa Y."/>
            <person name="Matsunawa H."/>
            <person name="Ichihara T."/>
            <person name="Shiohata N."/>
            <person name="Sano S."/>
            <person name="Moriya S."/>
            <person name="Momiyama H."/>
            <person name="Satoh N."/>
            <person name="Takami S."/>
            <person name="Terashima Y."/>
            <person name="Suzuki O."/>
            <person name="Nakagawa S."/>
            <person name="Senoh A."/>
            <person name="Mizoguchi H."/>
            <person name="Goto Y."/>
            <person name="Shimizu F."/>
            <person name="Wakebe H."/>
            <person name="Hishigaki H."/>
            <person name="Watanabe T."/>
            <person name="Sugiyama A."/>
            <person name="Takemoto M."/>
            <person name="Kawakami B."/>
            <person name="Yamazaki M."/>
            <person name="Watanabe K."/>
            <person name="Kumagai A."/>
            <person name="Itakura S."/>
            <person name="Fukuzumi Y."/>
            <person name="Fujimori Y."/>
            <person name="Komiyama M."/>
            <person name="Tashiro H."/>
            <person name="Tanigami A."/>
            <person name="Fujiwara T."/>
            <person name="Ono T."/>
            <person name="Yamada K."/>
            <person name="Fujii Y."/>
            <person name="Ozaki K."/>
            <person name="Hirao M."/>
            <person name="Ohmori Y."/>
            <person name="Kawabata A."/>
            <person name="Hikiji T."/>
            <person name="Kobatake N."/>
            <person name="Inagaki H."/>
            <person name="Ikema Y."/>
            <person name="Okamoto S."/>
            <person name="Okitani R."/>
            <person name="Kawakami T."/>
            <person name="Noguchi S."/>
            <person name="Itoh T."/>
            <person name="Shigeta K."/>
            <person name="Senba T."/>
            <person name="Matsumura K."/>
            <person name="Nakajima Y."/>
            <person name="Mizuno T."/>
            <person name="Morinaga M."/>
            <person name="Sasaki M."/>
            <person name="Togashi T."/>
            <person name="Oyama M."/>
            <person name="Hata H."/>
            <person name="Watanabe M."/>
            <person name="Komatsu T."/>
            <person name="Mizushima-Sugano J."/>
            <person name="Satoh T."/>
            <person name="Shirai Y."/>
            <person name="Takahashi Y."/>
            <person name="Nakagawa K."/>
            <person name="Okumura K."/>
            <person name="Nagase T."/>
            <person name="Nomura N."/>
            <person name="Kikuchi H."/>
            <person name="Masuho Y."/>
            <person name="Yamashita R."/>
            <person name="Nakai K."/>
            <person name="Yada T."/>
            <person name="Nakamura Y."/>
            <person name="Ohara O."/>
            <person name="Isogai T."/>
            <person name="Sugano S."/>
        </authorList>
    </citation>
    <scope>NUCLEOTIDE SEQUENCE [LARGE SCALE MRNA] OF 619-2151 (ISOFORM 3)</scope>
    <scope>NUCLEOTIDE SEQUENCE [LARGE SCALE MRNA] OF 1332-2151 (ISOFORM 2)</scope>
    <scope>NUCLEOTIDE SEQUENCE [LARGE SCALE MRNA] OF 1945-2151 (ISOFORM 1)</scope>
    <source>
        <tissue>Adrenal gland</tissue>
        <tissue>Lung</tissue>
        <tissue>Uterus</tissue>
    </source>
</reference>
<reference key="4">
    <citation type="journal article" date="2004" name="Genome Res.">
        <title>The status, quality, and expansion of the NIH full-length cDNA project: the Mammalian Gene Collection (MGC).</title>
        <authorList>
            <consortium name="The MGC Project Team"/>
        </authorList>
    </citation>
    <scope>NUCLEOTIDE SEQUENCE [LARGE SCALE MRNA] OF 1699-2151 (ISOFORM 4)</scope>
    <source>
        <tissue>Uterus</tissue>
    </source>
</reference>
<reference key="5">
    <citation type="journal article" date="2007" name="Science">
        <title>ATM and ATR substrate analysis reveals extensive protein networks responsive to DNA damage.</title>
        <authorList>
            <person name="Matsuoka S."/>
            <person name="Ballif B.A."/>
            <person name="Smogorzewska A."/>
            <person name="McDonald E.R. III"/>
            <person name="Hurov K.E."/>
            <person name="Luo J."/>
            <person name="Bakalarski C.E."/>
            <person name="Zhao Z."/>
            <person name="Solimini N."/>
            <person name="Lerenthal Y."/>
            <person name="Shiloh Y."/>
            <person name="Gygi S.P."/>
            <person name="Elledge S.J."/>
        </authorList>
    </citation>
    <scope>PHOSPHORYLATION [LARGE SCALE ANALYSIS] AT SER-157</scope>
    <scope>IDENTIFICATION BY MASS SPECTROMETRY [LARGE SCALE ANALYSIS]</scope>
    <source>
        <tissue>Embryonic kidney</tissue>
    </source>
</reference>
<reference key="6">
    <citation type="journal article" date="2008" name="Proc. Natl. Acad. Sci. U.S.A.">
        <title>A quantitative atlas of mitotic phosphorylation.</title>
        <authorList>
            <person name="Dephoure N."/>
            <person name="Zhou C."/>
            <person name="Villen J."/>
            <person name="Beausoleil S.A."/>
            <person name="Bakalarski C.E."/>
            <person name="Elledge S.J."/>
            <person name="Gygi S.P."/>
        </authorList>
    </citation>
    <scope>PHOSPHORYLATION [LARGE SCALE ANALYSIS] AT SER-1029</scope>
    <scope>IDENTIFICATION BY MASS SPECTROMETRY [LARGE SCALE ANALYSIS]</scope>
    <source>
        <tissue>Cervix carcinoma</tissue>
    </source>
</reference>
<reference key="7">
    <citation type="journal article" date="2009" name="Anal. Chem.">
        <title>Lys-N and trypsin cover complementary parts of the phosphoproteome in a refined SCX-based approach.</title>
        <authorList>
            <person name="Gauci S."/>
            <person name="Helbig A.O."/>
            <person name="Slijper M."/>
            <person name="Krijgsveld J."/>
            <person name="Heck A.J."/>
            <person name="Mohammed S."/>
        </authorList>
    </citation>
    <scope>IDENTIFICATION BY MASS SPECTROMETRY [LARGE SCALE ANALYSIS]</scope>
</reference>
<reference key="8">
    <citation type="journal article" date="2013" name="J. Proteome Res.">
        <title>Toward a comprehensive characterization of a human cancer cell phosphoproteome.</title>
        <authorList>
            <person name="Zhou H."/>
            <person name="Di Palma S."/>
            <person name="Preisinger C."/>
            <person name="Peng M."/>
            <person name="Polat A.N."/>
            <person name="Heck A.J."/>
            <person name="Mohammed S."/>
        </authorList>
    </citation>
    <scope>PHOSPHORYLATION [LARGE SCALE ANALYSIS] AT SER-582; SER-945 AND SER-1029</scope>
    <scope>IDENTIFICATION BY MASS SPECTROMETRY [LARGE SCALE ANALYSIS]</scope>
    <source>
        <tissue>Erythroleukemia</tissue>
    </source>
</reference>
<gene>
    <name type="primary">PRR14L</name>
    <name type="synonym">C22orf30</name>
</gene>
<evidence type="ECO:0000256" key="1">
    <source>
        <dbReference type="SAM" id="MobiDB-lite"/>
    </source>
</evidence>
<evidence type="ECO:0000303" key="2">
    <source>
    </source>
</evidence>
<evidence type="ECO:0000303" key="3">
    <source>
    </source>
</evidence>
<evidence type="ECO:0000305" key="4"/>
<evidence type="ECO:0007744" key="5">
    <source>
    </source>
</evidence>
<evidence type="ECO:0007744" key="6">
    <source>
    </source>
</evidence>
<evidence type="ECO:0007744" key="7">
    <source>
    </source>
</evidence>
<proteinExistence type="evidence at protein level"/>
<sequence length="2151" mass="237300">MLSSGVETQPVPLDSSMSAVVQELYSELPVSVSRELHADPEPSVIPDVKPGASSSLLSQNRALPLELQRTHVESCCEETYETLDHGSEPGRCGLVDSTAGGSVASGILDRAKRSESMEPKVFRDPGGQAGIIREPSEGAKEDPHQHSTAAEEKTSPSQEDLLMQSSKELSHVDLPEDFLRSKEGNVQITAETLLKSAEVQGMKVNGTKTDNNEGHKNGNVSKDLSAGCGEFQEVDKIMTSDEVSETSTLVTPEPLTFVDPVLTEATPKEKECEELKSCPWLSLPGNSAISNVDNGKEELCKPNLVCEADDNHQQLHGHHNEQPSSTHDSPTATSPLKENSEVSCFTSDLSGPESRTISLENCGFEGGGLLKRSAEKTDSSYFYRGDDQGKNLASREENEERLLIPRSERGGPFLFNAREPEKEISGRCSGEKEPVVSPKENIHNNCIQDSLHTGNSSSLMPNSFTEATEVMLNKNDLKITVHVQGNLTNPEDHKETFTNMSHPGGHSEESSFSSLMQIEEAGQTTPVEPNILSKSFYTKDCNSLVSIQRNLEGNTQLNEASCNDFLFERKSIVSLMPEDQISPVSEVLKPKQGTALLLPSPEFDYRPESEKVIQTSHDDIPLLDEQSIACEMNELSCTNELVVNKVESECVLNQQVSLNSQEHANLPTDSLLHLNKEMPLATGRDAHQSHHPPLEGRADVIADIQTIPIQTKIKDISPPGNQTCGASSNCPTLNIKPVSLERKKEMADSGTKALHSRLRSNKREAAGFPQVVSVIECHSVQSQDISSCHRVRKNVSQENMCSASAAFKSSKISLQVDNSLITKYENAFQHRDHCCQGTGHSVEKSSCKVSYTSQERELDGKETNGSLPGDKIRNKMVAGLLNSGISNKTIHTSSSIKLSEEGLEGKEQDVSKETVFCKYNISDHAIQELNQTVNIPGPEKVLDQSPTVMFSSFKNVKSVETLDQKADEVLDCQSNQNRPDECKSEGQSAKEMLSSDQRETVTEPHGEVNHNQKDLLVSSGSNNSLPCGSPKKCNLKGAFVKMSGCDESTEGMVDIVYTDCSNKLAEGVLDVKASNLLDCGARQEKLAFQEDSRSTLSRRELDAAHTGTTGQDSDFPVTAASTVDFLKIKKSCEENVCRSLKDCEMEKCPDSCAHEMESVADHEPNKRILGRVNLSLNDSHYGQQDKGTSLRETQEMTEGSRLEPNSEFGKESTFGISSKESMSCHDESSVSLRSLKSIEIMPSQENSETNVNSEETDLKNLCKPKDGEMLCENVKDCTVLPEMKEIVSRDWSNSSDRDSVCTCVEKNACKACHPHENSSDRHLPLTVKTDIKVKGEETEEHQRGRLGYLTVGEQSEELVTRETGDGDPVSNISQTHFKCRGILNHAEKQQSPEVLDYMLQKEEKYIRQQKAHTISQQCISSSLLLDDAQNQNQPKADKDESTMINEITLAKLAKDSIVAQTQKLEDQKEERLHHPLRKDTESCTSPCLLGAPRKAQDPSSAGCDQIHGAFAKKGVLPLKKQPHRTCKKVSYQEQIIVGRKIGKIRSSAFLKSSSNPIPTKAHRLLSLCTLSAPTRLEPETAPTKSLVSHIPKQMSTPCHPLRSLNFRKTTKESALLNKLSILASKLAPAMKTQKLRYRRCSSELLPMAKSYKRLRYKRLLDGFSSSTEQLNPYLAASGWDKRPNSKPMALYSLESIKMTFIDLSNKMPSLLFGSEIFPVSFHVKSSSSDCTTESSRTFPEHCAPARLALGEALQCPSQPPKWTFSFFLSHGCPGMATFREDTGVHSQTHTQAPPQPPAPLQDYGGTAIVQTRADCSVLGLHTLLALCSPGCYRIWTKKRSFSSHMPTMQRLFMTQFTQGLKGLRSPASIADKVFCSLPYSVGRVLSIWSQHGPSVCSFEISSLHSPHCKRQPSLGTTSSHTMLPYVPLPGMEATYNTSGSQTRLEPPFPALVPKSCLVAESAVSKLLLSASEFQVRGLDELDGVKAACPCPQSSPPEQKEAEPEKRPKKVSQIRIRKTIPRPDPNLTPMGLPRPKRLKKKEFSLEEIYTNKNYKSPPANRCLETIFEEPKERNGTLISISQQKRKRVLEFQDFTVPRKRRARGKVKVAGSFTRAQKAAVQSRELDALLIQKLMELETFFAKEEEQEQSSGC</sequence>
<dbReference type="EMBL" id="CT841517">
    <property type="protein sequence ID" value="CAJ86447.1"/>
    <property type="molecule type" value="mRNA"/>
</dbReference>
<dbReference type="EMBL" id="AC005004">
    <property type="status" value="NOT_ANNOTATED_CDS"/>
    <property type="molecule type" value="Genomic_DNA"/>
</dbReference>
<dbReference type="EMBL" id="AL031255">
    <property type="status" value="NOT_ANNOTATED_CDS"/>
    <property type="molecule type" value="Genomic_DNA"/>
</dbReference>
<dbReference type="EMBL" id="AK026712">
    <property type="protein sequence ID" value="BAB15536.1"/>
    <property type="status" value="ALT_SEQ"/>
    <property type="molecule type" value="mRNA"/>
</dbReference>
<dbReference type="EMBL" id="AK123082">
    <property type="protein sequence ID" value="BAC85533.1"/>
    <property type="status" value="ALT_INIT"/>
    <property type="molecule type" value="mRNA"/>
</dbReference>
<dbReference type="EMBL" id="AK130944">
    <property type="protein sequence ID" value="BAC85470.1"/>
    <property type="status" value="ALT_INIT"/>
    <property type="molecule type" value="mRNA"/>
</dbReference>
<dbReference type="EMBL" id="BC040859">
    <property type="protein sequence ID" value="AAH40859.1"/>
    <property type="status" value="ALT_INIT"/>
    <property type="molecule type" value="mRNA"/>
</dbReference>
<dbReference type="CCDS" id="CCDS13900.2">
    <molecule id="Q5THK1-1"/>
</dbReference>
<dbReference type="RefSeq" id="NP_775837.2">
    <molecule id="Q5THK1-1"/>
    <property type="nucleotide sequence ID" value="NM_173566.3"/>
</dbReference>
<dbReference type="RefSeq" id="XP_006724282.1">
    <property type="nucleotide sequence ID" value="XM_006724219.3"/>
</dbReference>
<dbReference type="RefSeq" id="XP_006724283.1">
    <property type="nucleotide sequence ID" value="XM_006724220.3"/>
</dbReference>
<dbReference type="RefSeq" id="XP_011528382.1">
    <property type="nucleotide sequence ID" value="XM_011530080.2"/>
</dbReference>
<dbReference type="RefSeq" id="XP_011528383.1">
    <property type="nucleotide sequence ID" value="XM_011530081.2"/>
</dbReference>
<dbReference type="RefSeq" id="XP_016884225.1">
    <property type="nucleotide sequence ID" value="XM_017028736.1"/>
</dbReference>
<dbReference type="RefSeq" id="XP_016884226.1">
    <property type="nucleotide sequence ID" value="XM_017028737.1"/>
</dbReference>
<dbReference type="BioGRID" id="128956">
    <property type="interactions" value="79"/>
</dbReference>
<dbReference type="FunCoup" id="Q5THK1">
    <property type="interactions" value="1701"/>
</dbReference>
<dbReference type="IntAct" id="Q5THK1">
    <property type="interactions" value="54"/>
</dbReference>
<dbReference type="STRING" id="9606.ENSP00000331845"/>
<dbReference type="iPTMnet" id="Q5THK1"/>
<dbReference type="PhosphoSitePlus" id="Q5THK1"/>
<dbReference type="SwissPalm" id="Q5THK1"/>
<dbReference type="BioMuta" id="PRR14L"/>
<dbReference type="DMDM" id="74746580"/>
<dbReference type="jPOST" id="Q5THK1"/>
<dbReference type="MassIVE" id="Q5THK1"/>
<dbReference type="PaxDb" id="9606-ENSP00000331845"/>
<dbReference type="PeptideAtlas" id="Q5THK1"/>
<dbReference type="ProteomicsDB" id="65153">
    <molecule id="Q5THK1-1"/>
</dbReference>
<dbReference type="ProteomicsDB" id="65154">
    <molecule id="Q5THK1-2"/>
</dbReference>
<dbReference type="ProteomicsDB" id="65155">
    <molecule id="Q5THK1-3"/>
</dbReference>
<dbReference type="ProteomicsDB" id="65156">
    <molecule id="Q5THK1-4"/>
</dbReference>
<dbReference type="Pumba" id="Q5THK1"/>
<dbReference type="Antibodypedia" id="45489">
    <property type="antibodies" value="24 antibodies from 11 providers"/>
</dbReference>
<dbReference type="DNASU" id="253143"/>
<dbReference type="Ensembl" id="ENST00000327423.11">
    <molecule id="Q5THK1-1"/>
    <property type="protein sequence ID" value="ENSP00000331845.6"/>
    <property type="gene ID" value="ENSG00000183530.14"/>
</dbReference>
<dbReference type="GeneID" id="253143"/>
<dbReference type="KEGG" id="hsa:253143"/>
<dbReference type="MANE-Select" id="ENST00000327423.11">
    <property type="protein sequence ID" value="ENSP00000331845.6"/>
    <property type="RefSeq nucleotide sequence ID" value="NM_173566.3"/>
    <property type="RefSeq protein sequence ID" value="NP_775837.2"/>
</dbReference>
<dbReference type="UCSC" id="uc003alp.5">
    <molecule id="Q5THK1-1"/>
    <property type="organism name" value="human"/>
</dbReference>
<dbReference type="AGR" id="HGNC:28738"/>
<dbReference type="CTD" id="253143"/>
<dbReference type="DisGeNET" id="253143"/>
<dbReference type="GeneCards" id="PRR14L"/>
<dbReference type="HGNC" id="HGNC:28738">
    <property type="gene designation" value="PRR14L"/>
</dbReference>
<dbReference type="HPA" id="ENSG00000183530">
    <property type="expression patterns" value="Low tissue specificity"/>
</dbReference>
<dbReference type="MIM" id="621035">
    <property type="type" value="gene"/>
</dbReference>
<dbReference type="neXtProt" id="NX_Q5THK1"/>
<dbReference type="OpenTargets" id="ENSG00000183530"/>
<dbReference type="PharmGKB" id="PA145149425"/>
<dbReference type="VEuPathDB" id="HostDB:ENSG00000183530"/>
<dbReference type="eggNOG" id="ENOG502RJ6E">
    <property type="taxonomic scope" value="Eukaryota"/>
</dbReference>
<dbReference type="GeneTree" id="ENSGT00520000055626"/>
<dbReference type="HOGENOM" id="CLU_001409_0_0_1"/>
<dbReference type="InParanoid" id="Q5THK1"/>
<dbReference type="OMA" id="MSCHDES"/>
<dbReference type="OrthoDB" id="6163216at2759"/>
<dbReference type="PAN-GO" id="Q5THK1">
    <property type="GO annotations" value="0 GO annotations based on evolutionary models"/>
</dbReference>
<dbReference type="PhylomeDB" id="Q5THK1"/>
<dbReference type="TreeFam" id="TF328446"/>
<dbReference type="PathwayCommons" id="Q5THK1"/>
<dbReference type="SignaLink" id="Q5THK1"/>
<dbReference type="BioGRID-ORCS" id="253143">
    <property type="hits" value="21 hits in 1156 CRISPR screens"/>
</dbReference>
<dbReference type="ChiTaRS" id="PRR14L">
    <property type="organism name" value="human"/>
</dbReference>
<dbReference type="GenomeRNAi" id="253143"/>
<dbReference type="Pharos" id="Q5THK1">
    <property type="development level" value="Tdark"/>
</dbReference>
<dbReference type="PRO" id="PR:Q5THK1"/>
<dbReference type="Proteomes" id="UP000005640">
    <property type="component" value="Chromosome 22"/>
</dbReference>
<dbReference type="RNAct" id="Q5THK1">
    <property type="molecule type" value="protein"/>
</dbReference>
<dbReference type="Bgee" id="ENSG00000183530">
    <property type="expression patterns" value="Expressed in gingival epithelium and 181 other cell types or tissues"/>
</dbReference>
<dbReference type="ExpressionAtlas" id="Q5THK1">
    <property type="expression patterns" value="baseline and differential"/>
</dbReference>
<dbReference type="InterPro" id="IPR026320">
    <property type="entry name" value="PRR14"/>
</dbReference>
<dbReference type="InterPro" id="IPR028149">
    <property type="entry name" value="Tantalus-like"/>
</dbReference>
<dbReference type="PANTHER" id="PTHR14522">
    <property type="entry name" value="EMO2-RELATED"/>
    <property type="match status" value="1"/>
</dbReference>
<dbReference type="PANTHER" id="PTHR14522:SF0">
    <property type="entry name" value="PROTEIN PRR14L"/>
    <property type="match status" value="1"/>
</dbReference>
<dbReference type="Pfam" id="PF15386">
    <property type="entry name" value="Tantalus"/>
    <property type="match status" value="1"/>
</dbReference>
<accession>Q5THK1</accession>
<accession>Q5THK4</accession>
<accession>Q6ZNN1</accession>
<accession>Q6ZWH0</accession>
<accession>Q8IW74</accession>
<accession>Q9H5T4</accession>
<keyword id="KW-0025">Alternative splicing</keyword>
<keyword id="KW-0597">Phosphoprotein</keyword>
<keyword id="KW-1267">Proteomics identification</keyword>
<keyword id="KW-1185">Reference proteome</keyword>
<organism>
    <name type="scientific">Homo sapiens</name>
    <name type="common">Human</name>
    <dbReference type="NCBI Taxonomy" id="9606"/>
    <lineage>
        <taxon>Eukaryota</taxon>
        <taxon>Metazoa</taxon>
        <taxon>Chordata</taxon>
        <taxon>Craniata</taxon>
        <taxon>Vertebrata</taxon>
        <taxon>Euteleostomi</taxon>
        <taxon>Mammalia</taxon>
        <taxon>Eutheria</taxon>
        <taxon>Euarchontoglires</taxon>
        <taxon>Primates</taxon>
        <taxon>Haplorrhini</taxon>
        <taxon>Catarrhini</taxon>
        <taxon>Hominidae</taxon>
        <taxon>Homo</taxon>
    </lineage>
</organism>
<feature type="chain" id="PRO_0000295739" description="Protein PRR14L">
    <location>
        <begin position="1"/>
        <end position="2151"/>
    </location>
</feature>
<feature type="region of interest" description="Disordered" evidence="1">
    <location>
        <begin position="112"/>
        <end position="160"/>
    </location>
</feature>
<feature type="region of interest" description="Disordered" evidence="1">
    <location>
        <begin position="206"/>
        <end position="225"/>
    </location>
</feature>
<feature type="region of interest" description="Disordered" evidence="1">
    <location>
        <begin position="314"/>
        <end position="350"/>
    </location>
</feature>
<feature type="region of interest" description="Disordered" evidence="1">
    <location>
        <begin position="974"/>
        <end position="1017"/>
    </location>
</feature>
<feature type="region of interest" description="Disordered" evidence="1">
    <location>
        <begin position="1091"/>
        <end position="1115"/>
    </location>
</feature>
<feature type="region of interest" description="Disordered" evidence="1">
    <location>
        <begin position="1178"/>
        <end position="1226"/>
    </location>
</feature>
<feature type="region of interest" description="Disordered" evidence="1">
    <location>
        <begin position="1782"/>
        <end position="1802"/>
    </location>
</feature>
<feature type="region of interest" description="Disordered" evidence="1">
    <location>
        <begin position="1986"/>
        <end position="2012"/>
    </location>
</feature>
<feature type="compositionally biased region" description="Basic and acidic residues" evidence="1">
    <location>
        <begin position="112"/>
        <end position="123"/>
    </location>
</feature>
<feature type="compositionally biased region" description="Basic and acidic residues" evidence="1">
    <location>
        <begin position="134"/>
        <end position="154"/>
    </location>
</feature>
<feature type="compositionally biased region" description="Polar residues" evidence="1">
    <location>
        <begin position="322"/>
        <end position="350"/>
    </location>
</feature>
<feature type="compositionally biased region" description="Basic and acidic residues" evidence="1">
    <location>
        <begin position="996"/>
        <end position="1013"/>
    </location>
</feature>
<feature type="compositionally biased region" description="Basic and acidic residues" evidence="1">
    <location>
        <begin position="1091"/>
        <end position="1103"/>
    </location>
</feature>
<feature type="compositionally biased region" description="Polar residues" evidence="1">
    <location>
        <begin position="1178"/>
        <end position="1187"/>
    </location>
</feature>
<feature type="compositionally biased region" description="Basic and acidic residues" evidence="1">
    <location>
        <begin position="1188"/>
        <end position="1201"/>
    </location>
</feature>
<feature type="modified residue" description="Phosphoserine" evidence="5">
    <location>
        <position position="157"/>
    </location>
</feature>
<feature type="modified residue" description="Phosphoserine" evidence="7">
    <location>
        <position position="582"/>
    </location>
</feature>
<feature type="modified residue" description="Phosphoserine" evidence="7">
    <location>
        <position position="945"/>
    </location>
</feature>
<feature type="modified residue" description="Phosphoserine" evidence="6 7">
    <location>
        <position position="1029"/>
    </location>
</feature>
<feature type="splice variant" id="VSP_027046" description="In isoform 3." evidence="2">
    <original>SLKSIE</original>
    <variation>SPCLTT</variation>
    <location>
        <begin position="1234"/>
        <end position="1239"/>
    </location>
</feature>
<feature type="splice variant" id="VSP_027047" description="In isoform 3." evidence="2">
    <location>
        <begin position="1240"/>
        <end position="2151"/>
    </location>
</feature>
<feature type="splice variant" id="VSP_027048" description="In isoform 2." evidence="2">
    <original>AEPEKRPKKVSQIRIRKTIPRPDPNLTPMGLPRPKRLKKKEFSLEEIYTNKNYKSPPANRCLETIFEEPKERNGTLISISQQKRKRVLEFQDFTVPRKRRARGKVKVAGSFTRAQKAAVQSRELDALLIQKLMELETFFAKEEEQEQSSGC</original>
    <variation>VKEEGV</variation>
    <location>
        <begin position="2001"/>
        <end position="2151"/>
    </location>
</feature>
<feature type="splice variant" id="VSP_027049" description="In isoform 4." evidence="3">
    <original>CLETIFEEPKERNGTLISISQQKRKRVLEFQDFTVPRKRRARGKVKVAGSFTRAQKAAVQSRELDALLIQKLMELETFFAKEEEQEQSSGC</original>
    <variation>DLDSSCPSTDSETGHFLVFGYAQRQAQPHPLLASRRLIGCSSPEGRGHPRSYPYWRRLLVLCWYLPGWRAGRVTWLRLATWAGRGDSSL</variation>
    <location>
        <begin position="2061"/>
        <end position="2151"/>
    </location>
</feature>
<feature type="sequence variant" id="VAR_059641" description="In dbSNP:rs140081.">
    <original>N</original>
    <variation>S</variation>
    <location>
        <position position="455"/>
    </location>
</feature>
<feature type="sequence variant" id="VAR_059642" description="In dbSNP:rs140080.">
    <original>L</original>
    <variation>P</variation>
    <location>
        <position position="740"/>
    </location>
</feature>
<feature type="sequence variant" id="VAR_059643" description="In dbSNP:rs17821493.">
    <original>M</original>
    <variation>I</variation>
    <location>
        <position position="876"/>
    </location>
</feature>
<feature type="sequence variant" id="VAR_059644" description="In dbSNP:rs140079.">
    <original>T</original>
    <variation>I</variation>
    <location>
        <position position="961"/>
    </location>
</feature>
<feature type="sequence variant" id="VAR_059645" description="In dbSNP:rs9619227.">
    <original>D</original>
    <variation>N</variation>
    <location>
        <position position="963"/>
    </location>
</feature>
<feature type="sequence variant" id="VAR_059646" description="In dbSNP:rs12159328.">
    <original>S</original>
    <variation>P</variation>
    <location>
        <position position="1151"/>
    </location>
</feature>
<feature type="sequence variant" id="VAR_059647" description="In dbSNP:rs140078.">
    <original>S</original>
    <variation>L</variation>
    <location>
        <position position="1221"/>
    </location>
</feature>
<feature type="sequence variant" id="VAR_061637" description="In dbSNP:rs61461793.">
    <original>E</original>
    <variation>K</variation>
    <location>
        <position position="1316"/>
    </location>
</feature>
<feature type="sequence variant" id="VAR_059648" description="In dbSNP:rs3804090.">
    <original>L</original>
    <variation>F</variation>
    <location>
        <position position="1395"/>
    </location>
</feature>
<feature type="sequence variant" id="VAR_059649" description="In dbSNP:rs16989427.">
    <original>V</original>
    <variation>I</variation>
    <location>
        <position position="1784"/>
    </location>
</feature>
<feature type="sequence conflict" description="In Ref. 3; BAB15536." evidence="4" ref="3">
    <original>I</original>
    <variation>N</variation>
    <location>
        <position position="885"/>
    </location>
</feature>
<feature type="sequence conflict" description="In Ref. 3; BAB15536." evidence="4" ref="3">
    <original>S</original>
    <variation>F</variation>
    <location>
        <position position="1223"/>
    </location>
</feature>
<name>PR14L_HUMAN</name>
<protein>
    <recommendedName>
        <fullName>Protein PRR14L</fullName>
    </recommendedName>
    <alternativeName>
        <fullName>Proline rich 14-like protein</fullName>
    </alternativeName>
</protein>
<comment type="alternative products">
    <event type="alternative splicing"/>
    <isoform>
        <id>Q5THK1-1</id>
        <name>1</name>
        <sequence type="displayed"/>
    </isoform>
    <isoform>
        <id>Q5THK1-2</id>
        <name>2</name>
        <sequence type="described" ref="VSP_027048"/>
    </isoform>
    <isoform>
        <id>Q5THK1-3</id>
        <name>3</name>
        <sequence type="described" ref="VSP_027046 VSP_027047"/>
    </isoform>
    <isoform>
        <id>Q5THK1-4</id>
        <name>4</name>
        <sequence type="described" ref="VSP_027049"/>
    </isoform>
</comment>
<comment type="sequence caution" evidence="4">
    <conflict type="erroneous initiation">
        <sequence resource="EMBL-CDS" id="AAH40859"/>
    </conflict>
    <text>Truncated N-terminus.</text>
</comment>
<comment type="sequence caution" evidence="4">
    <conflict type="erroneous initiation">
        <sequence resource="EMBL-CDS" id="BAB15536"/>
    </conflict>
    <text>Truncated N-terminus.</text>
</comment>
<comment type="sequence caution" evidence="4">
    <conflict type="frameshift">
        <sequence resource="EMBL-CDS" id="BAB15536"/>
    </conflict>
</comment>
<comment type="sequence caution" evidence="4">
    <conflict type="erroneous initiation">
        <sequence resource="EMBL-CDS" id="BAC85470"/>
    </conflict>
    <text>Truncated N-terminus.</text>
</comment>
<comment type="sequence caution" evidence="4">
    <conflict type="erroneous initiation">
        <sequence resource="EMBL-CDS" id="BAC85533"/>
    </conflict>
    <text>Truncated N-terminus.</text>
</comment>